<organism>
    <name type="scientific">Monodelphis domestica</name>
    <name type="common">Gray short-tailed opossum</name>
    <dbReference type="NCBI Taxonomy" id="13616"/>
    <lineage>
        <taxon>Eukaryota</taxon>
        <taxon>Metazoa</taxon>
        <taxon>Chordata</taxon>
        <taxon>Craniata</taxon>
        <taxon>Vertebrata</taxon>
        <taxon>Euteleostomi</taxon>
        <taxon>Mammalia</taxon>
        <taxon>Metatheria</taxon>
        <taxon>Didelphimorphia</taxon>
        <taxon>Didelphidae</taxon>
        <taxon>Monodelphis</taxon>
    </lineage>
</organism>
<name>AMEL_MONDO</name>
<sequence length="202" mass="22996">IPLPPHPGHPGYINFSYEVLTPLKWYQSMMRHEYPSYGYEPMGGWLHHQIIPVLSQQHSPSHSLPPQHHIPIMAAQQPAPPQQPVMPVPGQHPMAPTQHHQPNLPQPGQQPYQPQPAQQPQPHQPIQPIQPIQPIQPMQPMQPMQPMQPMQPMQPQTPVHAVRPLPPQPPLPPMFPMQPMSPMLPDMEAWPATDKTKREEVD</sequence>
<accession>Q28462</accession>
<protein>
    <recommendedName>
        <fullName>Amelogenin</fullName>
    </recommendedName>
</protein>
<feature type="chain" id="PRO_0000144062" description="Amelogenin">
    <location>
        <begin position="1"/>
        <end position="202"/>
    </location>
</feature>
<feature type="region of interest" description="Disordered" evidence="2">
    <location>
        <begin position="77"/>
        <end position="202"/>
    </location>
</feature>
<feature type="compositionally biased region" description="Pro residues" evidence="2">
    <location>
        <begin position="78"/>
        <end position="87"/>
    </location>
</feature>
<feature type="compositionally biased region" description="Low complexity" evidence="2">
    <location>
        <begin position="101"/>
        <end position="112"/>
    </location>
</feature>
<feature type="compositionally biased region" description="Pro residues" evidence="2">
    <location>
        <begin position="113"/>
        <end position="125"/>
    </location>
</feature>
<feature type="compositionally biased region" description="Low complexity" evidence="2">
    <location>
        <begin position="126"/>
        <end position="158"/>
    </location>
</feature>
<feature type="compositionally biased region" description="Pro residues" evidence="2">
    <location>
        <begin position="164"/>
        <end position="176"/>
    </location>
</feature>
<feature type="modified residue" description="Phosphoserine" evidence="1">
    <location>
        <position position="16"/>
    </location>
</feature>
<feature type="sequence conflict" description="In Ref. 1; AA sequence." evidence="4" ref="1">
    <original>HE</original>
    <variation>QQ</variation>
    <location>
        <begin position="32"/>
        <end position="33"/>
    </location>
</feature>
<comment type="function">
    <text>Plays a role in the biomineralization of teeth. Seems to regulate the formation of crystallites during the secretory stage of tooth enamel development. Thought to play a major role in the structural organization and mineralization of developing enamel.</text>
</comment>
<comment type="subcellular location">
    <subcellularLocation>
        <location>Secreted</location>
        <location>Extracellular space</location>
        <location>Extracellular matrix</location>
    </subcellularLocation>
</comment>
<comment type="alternative products">
    <event type="alternative splicing"/>
    <isoform>
        <id>Q28462-1</id>
        <name>1</name>
        <sequence type="displayed"/>
    </isoform>
    <text>A number of isoforms are produced.</text>
</comment>
<comment type="developmental stage">
    <text evidence="3">Expressed in first lower molars at birth.</text>
</comment>
<comment type="similarity">
    <text evidence="4">Belongs to the amelogenin family.</text>
</comment>
<gene>
    <name type="primary">AMEL</name>
</gene>
<dbReference type="EMBL" id="U43407">
    <property type="protein sequence ID" value="AAB41109.1"/>
    <property type="molecule type" value="mRNA"/>
</dbReference>
<dbReference type="STRING" id="13616.ENSMODP00000021676"/>
<dbReference type="eggNOG" id="ENOG502S4XP">
    <property type="taxonomic scope" value="Eukaryota"/>
</dbReference>
<dbReference type="InParanoid" id="Q28462"/>
<dbReference type="Proteomes" id="UP000002280">
    <property type="component" value="Unplaced"/>
</dbReference>
<dbReference type="GO" id="GO:0062023">
    <property type="term" value="C:collagen-containing extracellular matrix"/>
    <property type="evidence" value="ECO:0000318"/>
    <property type="project" value="GO_Central"/>
</dbReference>
<dbReference type="GO" id="GO:0005576">
    <property type="term" value="C:extracellular region"/>
    <property type="evidence" value="ECO:0007669"/>
    <property type="project" value="UniProtKB-KW"/>
</dbReference>
<dbReference type="GO" id="GO:0030345">
    <property type="term" value="F:structural constituent of tooth enamel"/>
    <property type="evidence" value="ECO:0000318"/>
    <property type="project" value="GO_Central"/>
</dbReference>
<dbReference type="GO" id="GO:0070166">
    <property type="term" value="P:enamel mineralization"/>
    <property type="evidence" value="ECO:0000318"/>
    <property type="project" value="GO_Central"/>
</dbReference>
<dbReference type="InterPro" id="IPR004116">
    <property type="entry name" value="Amelogenin"/>
</dbReference>
<dbReference type="PANTHER" id="PTHR46794:SF2">
    <property type="entry name" value="AMELOGENIN, X ISOFORM"/>
    <property type="match status" value="1"/>
</dbReference>
<dbReference type="PANTHER" id="PTHR46794">
    <property type="entry name" value="AMELOGENIN, Y ISOFORM"/>
    <property type="match status" value="1"/>
</dbReference>
<dbReference type="Pfam" id="PF02948">
    <property type="entry name" value="Amelogenin"/>
    <property type="match status" value="2"/>
</dbReference>
<dbReference type="PRINTS" id="PR01757">
    <property type="entry name" value="AMELOGENIN"/>
</dbReference>
<dbReference type="SMART" id="SM00818">
    <property type="entry name" value="Amelogenin"/>
    <property type="match status" value="1"/>
</dbReference>
<evidence type="ECO:0000250" key="1">
    <source>
        <dbReference type="UniProtKB" id="P45561"/>
    </source>
</evidence>
<evidence type="ECO:0000256" key="2">
    <source>
        <dbReference type="SAM" id="MobiDB-lite"/>
    </source>
</evidence>
<evidence type="ECO:0000269" key="3">
    <source>
    </source>
</evidence>
<evidence type="ECO:0000305" key="4"/>
<reference key="1">
    <citation type="journal article" date="1996" name="J. Dent. Res.">
        <title>Cloning, DNA sequence, and alternative splicing of opossum amelogenin mRNAs.</title>
        <authorList>
            <person name="Hu C.C."/>
            <person name="Zhang C."/>
            <person name="Qian Q."/>
            <person name="Ryu O.H."/>
            <person name="Moradian-Oldak J."/>
            <person name="Fincham A.G."/>
            <person name="Simmer J.P."/>
        </authorList>
    </citation>
    <scope>NUCLEOTIDE SEQUENCE [MRNA]</scope>
    <scope>PROTEIN SEQUENCE OF 1-42</scope>
    <scope>ALTERNATIVE SPLICING</scope>
</reference>
<reference key="2">
    <citation type="journal article" date="2011" name="J. Cell Sci.">
        <title>PERP regulates enamel formation via effects on cell-cell adhesion and gene expression.</title>
        <authorList>
            <person name="Jheon A.H."/>
            <person name="Mostowfi P."/>
            <person name="Snead M.L."/>
            <person name="Ihrie R.A."/>
            <person name="Sone E."/>
            <person name="Pramparo T."/>
            <person name="Attardi L.D."/>
            <person name="Klein O.D."/>
        </authorList>
    </citation>
    <scope>DEVELOPMENTAL STAGE</scope>
</reference>
<proteinExistence type="evidence at protein level"/>
<keyword id="KW-0025">Alternative splicing</keyword>
<keyword id="KW-0091">Biomineralization</keyword>
<keyword id="KW-0903">Direct protein sequencing</keyword>
<keyword id="KW-0272">Extracellular matrix</keyword>
<keyword id="KW-0597">Phosphoprotein</keyword>
<keyword id="KW-1185">Reference proteome</keyword>
<keyword id="KW-0677">Repeat</keyword>
<keyword id="KW-0964">Secreted</keyword>